<name>MED14_DEBHA</name>
<gene>
    <name type="primary">RGR1</name>
    <name type="synonym">MED14</name>
    <name type="ordered locus">DEHA2E12958g</name>
</gene>
<protein>
    <recommendedName>
        <fullName>Mediator of RNA polymerase II transcription subunit 14</fullName>
    </recommendedName>
    <alternativeName>
        <fullName>Mediator complex subunit 14</fullName>
    </alternativeName>
</protein>
<feature type="chain" id="PRO_0000304601" description="Mediator of RNA polymerase II transcription subunit 14">
    <location>
        <begin position="1"/>
        <end position="1123"/>
    </location>
</feature>
<feature type="region of interest" description="Disordered" evidence="2">
    <location>
        <begin position="450"/>
        <end position="484"/>
    </location>
</feature>
<evidence type="ECO:0000250" key="1"/>
<evidence type="ECO:0000256" key="2">
    <source>
        <dbReference type="SAM" id="MobiDB-lite"/>
    </source>
</evidence>
<evidence type="ECO:0000305" key="3"/>
<organism>
    <name type="scientific">Debaryomyces hansenii (strain ATCC 36239 / CBS 767 / BCRC 21394 / JCM 1990 / NBRC 0083 / IGC 2968)</name>
    <name type="common">Yeast</name>
    <name type="synonym">Torulaspora hansenii</name>
    <dbReference type="NCBI Taxonomy" id="284592"/>
    <lineage>
        <taxon>Eukaryota</taxon>
        <taxon>Fungi</taxon>
        <taxon>Dikarya</taxon>
        <taxon>Ascomycota</taxon>
        <taxon>Saccharomycotina</taxon>
        <taxon>Pichiomycetes</taxon>
        <taxon>Debaryomycetaceae</taxon>
        <taxon>Debaryomyces</taxon>
    </lineage>
</organism>
<reference key="1">
    <citation type="journal article" date="2004" name="Nature">
        <title>Genome evolution in yeasts.</title>
        <authorList>
            <person name="Dujon B."/>
            <person name="Sherman D."/>
            <person name="Fischer G."/>
            <person name="Durrens P."/>
            <person name="Casaregola S."/>
            <person name="Lafontaine I."/>
            <person name="de Montigny J."/>
            <person name="Marck C."/>
            <person name="Neuveglise C."/>
            <person name="Talla E."/>
            <person name="Goffard N."/>
            <person name="Frangeul L."/>
            <person name="Aigle M."/>
            <person name="Anthouard V."/>
            <person name="Babour A."/>
            <person name="Barbe V."/>
            <person name="Barnay S."/>
            <person name="Blanchin S."/>
            <person name="Beckerich J.-M."/>
            <person name="Beyne E."/>
            <person name="Bleykasten C."/>
            <person name="Boisrame A."/>
            <person name="Boyer J."/>
            <person name="Cattolico L."/>
            <person name="Confanioleri F."/>
            <person name="de Daruvar A."/>
            <person name="Despons L."/>
            <person name="Fabre E."/>
            <person name="Fairhead C."/>
            <person name="Ferry-Dumazet H."/>
            <person name="Groppi A."/>
            <person name="Hantraye F."/>
            <person name="Hennequin C."/>
            <person name="Jauniaux N."/>
            <person name="Joyet P."/>
            <person name="Kachouri R."/>
            <person name="Kerrest A."/>
            <person name="Koszul R."/>
            <person name="Lemaire M."/>
            <person name="Lesur I."/>
            <person name="Ma L."/>
            <person name="Muller H."/>
            <person name="Nicaud J.-M."/>
            <person name="Nikolski M."/>
            <person name="Oztas S."/>
            <person name="Ozier-Kalogeropoulos O."/>
            <person name="Pellenz S."/>
            <person name="Potier S."/>
            <person name="Richard G.-F."/>
            <person name="Straub M.-L."/>
            <person name="Suleau A."/>
            <person name="Swennen D."/>
            <person name="Tekaia F."/>
            <person name="Wesolowski-Louvel M."/>
            <person name="Westhof E."/>
            <person name="Wirth B."/>
            <person name="Zeniou-Meyer M."/>
            <person name="Zivanovic Y."/>
            <person name="Bolotin-Fukuhara M."/>
            <person name="Thierry A."/>
            <person name="Bouchier C."/>
            <person name="Caudron B."/>
            <person name="Scarpelli C."/>
            <person name="Gaillardin C."/>
            <person name="Weissenbach J."/>
            <person name="Wincker P."/>
            <person name="Souciet J.-L."/>
        </authorList>
    </citation>
    <scope>NUCLEOTIDE SEQUENCE [LARGE SCALE GENOMIC DNA]</scope>
    <source>
        <strain>ATCC 36239 / CBS 767 / BCRC 21394 / JCM 1990 / NBRC 0083 / IGC 2968</strain>
    </source>
</reference>
<dbReference type="EMBL" id="CR382137">
    <property type="protein sequence ID" value="CAG88110.2"/>
    <property type="molecule type" value="Genomic_DNA"/>
</dbReference>
<dbReference type="RefSeq" id="XP_459869.2">
    <property type="nucleotide sequence ID" value="XM_459869.1"/>
</dbReference>
<dbReference type="SMR" id="Q6BPK1"/>
<dbReference type="FunCoup" id="Q6BPK1">
    <property type="interactions" value="274"/>
</dbReference>
<dbReference type="STRING" id="284592.Q6BPK1"/>
<dbReference type="GeneID" id="2902653"/>
<dbReference type="KEGG" id="dha:DEHA2E12958g"/>
<dbReference type="VEuPathDB" id="FungiDB:DEHA2E12958g"/>
<dbReference type="eggNOG" id="KOG1875">
    <property type="taxonomic scope" value="Eukaryota"/>
</dbReference>
<dbReference type="HOGENOM" id="CLU_283151_0_0_1"/>
<dbReference type="InParanoid" id="Q6BPK1"/>
<dbReference type="OMA" id="FIKIYTL"/>
<dbReference type="OrthoDB" id="205099at2759"/>
<dbReference type="Proteomes" id="UP000000599">
    <property type="component" value="Chromosome E"/>
</dbReference>
<dbReference type="GO" id="GO:0070847">
    <property type="term" value="C:core mediator complex"/>
    <property type="evidence" value="ECO:0007669"/>
    <property type="project" value="TreeGrafter"/>
</dbReference>
<dbReference type="GO" id="GO:0016592">
    <property type="term" value="C:mediator complex"/>
    <property type="evidence" value="ECO:0007669"/>
    <property type="project" value="InterPro"/>
</dbReference>
<dbReference type="GO" id="GO:0003712">
    <property type="term" value="F:transcription coregulator activity"/>
    <property type="evidence" value="ECO:0007669"/>
    <property type="project" value="InterPro"/>
</dbReference>
<dbReference type="GO" id="GO:0006357">
    <property type="term" value="P:regulation of transcription by RNA polymerase II"/>
    <property type="evidence" value="ECO:0007669"/>
    <property type="project" value="InterPro"/>
</dbReference>
<dbReference type="InterPro" id="IPR055122">
    <property type="entry name" value="Med14_N"/>
</dbReference>
<dbReference type="InterPro" id="IPR013947">
    <property type="entry name" value="Mediator_Med14"/>
</dbReference>
<dbReference type="PANTHER" id="PTHR12809">
    <property type="entry name" value="MEDIATOR COMPLEX SUBUNIT"/>
    <property type="match status" value="1"/>
</dbReference>
<dbReference type="PANTHER" id="PTHR12809:SF2">
    <property type="entry name" value="MEDIATOR OF RNA POLYMERASE II TRANSCRIPTION SUBUNIT 14"/>
    <property type="match status" value="1"/>
</dbReference>
<dbReference type="Pfam" id="PF08638">
    <property type="entry name" value="Med14"/>
    <property type="match status" value="1"/>
</dbReference>
<keyword id="KW-0010">Activator</keyword>
<keyword id="KW-0539">Nucleus</keyword>
<keyword id="KW-1185">Reference proteome</keyword>
<keyword id="KW-0804">Transcription</keyword>
<keyword id="KW-0805">Transcription regulation</keyword>
<accession>Q6BPK1</accession>
<sequence>MSLLSIDDIFIPTSDLLNHSHNNKRLNYNQAKQTLLLNMNGSYPSSNNPISNGEPCDAKSNHLGGEMHNGVGSKLENGILKKAPDIPHITNNIIPLSNVLKFYTQEAYKQLTTAIENLSSTKDTENDSSRKKFFLNLIISLRQDFIKIYTLVKWASSSKDISKLIDLLNWFRSQDFYFEQLGYGLNELNRYSGAKLPNSDIITSLEVFIKKRPQLPSYNLISTPPISSEKTLEVLKDLNLTLMTRMALINNLPKRFINNYEIRDGRVYFTIQNEFQVSVTVGNDLIIEQEDDYYKSPFYFIDFKFLFGINPETALITHKDNKIITKLPKSSFQNLEKIVNTVLLNSGLGGLYDLLHKYSISFKLYLIARQLKDISINSKWRNNIQFKYQNGKSLILINYWSSHYLSRNWKSFIELGIDKNYNLNFRWFKNGTYELNHGISGIFDRNNIKKQSDASDEQQNNIEPNEESLEDLREDNNEDESEPQDLSVDLILNIIVNKHSEMLMDKIYETIVKRLSDQEEYCSFISCHQLLLKLTPNKSVVFAINPLTGFFYFIDPSPIQNQVTKKINTQSSNHKNKPFFSENDMVENIVNQLIQLKLEMFNKEINNKLITSGWINNEIIKLNDYETIKLSNFLNGDNFNNSNYNKIQFYRCKNWPLSWFLSNLVSGDNFRTFWWVARIKSIKGEWKIQWVQQLKFDQEMETSDELTLDYKFFNNLSSLCSNMIIDHMILEELQTKKIQYIQKQSKEKAAELLNKFQIDEVKEENIKPEETNNPFVYESIIMLYNDNRLLPVSNSSTSLFLKIKLITLNNSTQMKLKLFGNLRNIPNTLAETFNQLNLHISKSQNYFEINDIVNLSNKINDSSIKETRLLDSILLKLNVLNELIKVLYQLDQNNIEIVNSSIDSIQIKIDEESNNLTIKLPEMDEKFSLLSSNTESNEMKLIISYLNKYLSMTSKVQENEIIGIIKYFKEITPIVKTIKSVRATLDEKNKMKLSNGLSKLNFDVEFQNLNLIQFVYFLNHTNVNSNKKILKDKIVIKLNFMRNRFNKQDRLLLKLSMKDNLNSRNLKYKKLFELIYKGISEVDTTNGSKITKLNYDFIVDSSLINELMIKITDAFILFLSDNA</sequence>
<proteinExistence type="inferred from homology"/>
<comment type="function">
    <text evidence="1">Component of the Mediator complex, a coactivator involved in the regulated transcription of nearly all RNA polymerase II-dependent genes. Mediator functions as a bridge to convey information from gene-specific regulatory proteins to the basal RNA polymerase II transcription machinery. Mediator is recruited to promoters by direct interactions with regulatory proteins and serves as a scaffold for the assembly of a functional preinitiation complex with RNA polymerase II and the general transcription factors (By similarity).</text>
</comment>
<comment type="subunit">
    <text evidence="1">Component of the Mediator complex.</text>
</comment>
<comment type="subcellular location">
    <subcellularLocation>
        <location evidence="3">Nucleus</location>
    </subcellularLocation>
</comment>
<comment type="similarity">
    <text evidence="3">Belongs to the Mediator complex subunit 14 family.</text>
</comment>